<organism>
    <name type="scientific">Homo sapiens</name>
    <name type="common">Human</name>
    <dbReference type="NCBI Taxonomy" id="9606"/>
    <lineage>
        <taxon>Eukaryota</taxon>
        <taxon>Metazoa</taxon>
        <taxon>Chordata</taxon>
        <taxon>Craniata</taxon>
        <taxon>Vertebrata</taxon>
        <taxon>Euteleostomi</taxon>
        <taxon>Mammalia</taxon>
        <taxon>Eutheria</taxon>
        <taxon>Euarchontoglires</taxon>
        <taxon>Primates</taxon>
        <taxon>Haplorrhini</taxon>
        <taxon>Catarrhini</taxon>
        <taxon>Hominidae</taxon>
        <taxon>Homo</taxon>
    </lineage>
</organism>
<reference key="1">
    <citation type="journal article" date="2008" name="J. Biol. Chem.">
        <title>Three novel collagen VI chains with high homology to the alpha 3 chain.</title>
        <authorList>
            <person name="Gara S.K."/>
            <person name="Grumati P."/>
            <person name="Urciuolo A."/>
            <person name="Bonaldo P."/>
            <person name="Kobbe B."/>
            <person name="Koch M."/>
            <person name="Paulsson M."/>
            <person name="Wagener R."/>
        </authorList>
    </citation>
    <scope>NUCLEOTIDE SEQUENCE [MRNA] (ISOFORM 1)</scope>
</reference>
<reference key="2">
    <citation type="journal article" date="2006" name="Nature">
        <title>The DNA sequence, annotation and analysis of human chromosome 3.</title>
        <authorList>
            <person name="Muzny D.M."/>
            <person name="Scherer S.E."/>
            <person name="Kaul R."/>
            <person name="Wang J."/>
            <person name="Yu J."/>
            <person name="Sudbrak R."/>
            <person name="Buhay C.J."/>
            <person name="Chen R."/>
            <person name="Cree A."/>
            <person name="Ding Y."/>
            <person name="Dugan-Rocha S."/>
            <person name="Gill R."/>
            <person name="Gunaratne P."/>
            <person name="Harris R.A."/>
            <person name="Hawes A.C."/>
            <person name="Hernandez J."/>
            <person name="Hodgson A.V."/>
            <person name="Hume J."/>
            <person name="Jackson A."/>
            <person name="Khan Z.M."/>
            <person name="Kovar-Smith C."/>
            <person name="Lewis L.R."/>
            <person name="Lozado R.J."/>
            <person name="Metzker M.L."/>
            <person name="Milosavljevic A."/>
            <person name="Miner G.R."/>
            <person name="Morgan M.B."/>
            <person name="Nazareth L.V."/>
            <person name="Scott G."/>
            <person name="Sodergren E."/>
            <person name="Song X.-Z."/>
            <person name="Steffen D."/>
            <person name="Wei S."/>
            <person name="Wheeler D.A."/>
            <person name="Wright M.W."/>
            <person name="Worley K.C."/>
            <person name="Yuan Y."/>
            <person name="Zhang Z."/>
            <person name="Adams C.Q."/>
            <person name="Ansari-Lari M.A."/>
            <person name="Ayele M."/>
            <person name="Brown M.J."/>
            <person name="Chen G."/>
            <person name="Chen Z."/>
            <person name="Clendenning J."/>
            <person name="Clerc-Blankenburg K.P."/>
            <person name="Chen R."/>
            <person name="Chen Z."/>
            <person name="Davis C."/>
            <person name="Delgado O."/>
            <person name="Dinh H.H."/>
            <person name="Dong W."/>
            <person name="Draper H."/>
            <person name="Ernst S."/>
            <person name="Fu G."/>
            <person name="Gonzalez-Garay M.L."/>
            <person name="Garcia D.K."/>
            <person name="Gillett W."/>
            <person name="Gu J."/>
            <person name="Hao B."/>
            <person name="Haugen E."/>
            <person name="Havlak P."/>
            <person name="He X."/>
            <person name="Hennig S."/>
            <person name="Hu S."/>
            <person name="Huang W."/>
            <person name="Jackson L.R."/>
            <person name="Jacob L.S."/>
            <person name="Kelly S.H."/>
            <person name="Kube M."/>
            <person name="Levy R."/>
            <person name="Li Z."/>
            <person name="Liu B."/>
            <person name="Liu J."/>
            <person name="Liu W."/>
            <person name="Lu J."/>
            <person name="Maheshwari M."/>
            <person name="Nguyen B.-V."/>
            <person name="Okwuonu G.O."/>
            <person name="Palmeiri A."/>
            <person name="Pasternak S."/>
            <person name="Perez L.M."/>
            <person name="Phelps K.A."/>
            <person name="Plopper F.J."/>
            <person name="Qiang B."/>
            <person name="Raymond C."/>
            <person name="Rodriguez R."/>
            <person name="Saenphimmachak C."/>
            <person name="Santibanez J."/>
            <person name="Shen H."/>
            <person name="Shen Y."/>
            <person name="Subramanian S."/>
            <person name="Tabor P.E."/>
            <person name="Verduzco D."/>
            <person name="Waldron L."/>
            <person name="Wang J."/>
            <person name="Wang J."/>
            <person name="Wang Q."/>
            <person name="Williams G.A."/>
            <person name="Wong G.K.-S."/>
            <person name="Yao Z."/>
            <person name="Zhang J."/>
            <person name="Zhang X."/>
            <person name="Zhao G."/>
            <person name="Zhou J."/>
            <person name="Zhou Y."/>
            <person name="Nelson D."/>
            <person name="Lehrach H."/>
            <person name="Reinhardt R."/>
            <person name="Naylor S.L."/>
            <person name="Yang H."/>
            <person name="Olson M."/>
            <person name="Weinstock G."/>
            <person name="Gibbs R.A."/>
        </authorList>
    </citation>
    <scope>NUCLEOTIDE SEQUENCE [LARGE SCALE GENOMIC DNA]</scope>
</reference>
<reference key="3">
    <citation type="journal article" date="2007" name="BMC Genomics">
        <title>The full-ORF clone resource of the German cDNA consortium.</title>
        <authorList>
            <person name="Bechtel S."/>
            <person name="Rosenfelder H."/>
            <person name="Duda A."/>
            <person name="Schmidt C.P."/>
            <person name="Ernst U."/>
            <person name="Wellenreuther R."/>
            <person name="Mehrle A."/>
            <person name="Schuster C."/>
            <person name="Bahr A."/>
            <person name="Bloecker H."/>
            <person name="Heubner D."/>
            <person name="Hoerlein A."/>
            <person name="Michel G."/>
            <person name="Wedler H."/>
            <person name="Koehrer K."/>
            <person name="Ottenwaelder B."/>
            <person name="Poustka A."/>
            <person name="Wiemann S."/>
            <person name="Schupp I."/>
        </authorList>
    </citation>
    <scope>NUCLEOTIDE SEQUENCE [LARGE SCALE MRNA] OF 1364-2263 (ISOFORM 2)</scope>
    <source>
        <tissue>Lymph node</tissue>
    </source>
</reference>
<reference key="4">
    <citation type="journal article" date="2009" name="J. Proteome Res.">
        <title>Glycoproteomics analysis of human liver tissue by combination of multiple enzyme digestion and hydrazide chemistry.</title>
        <authorList>
            <person name="Chen R."/>
            <person name="Jiang X."/>
            <person name="Sun D."/>
            <person name="Han G."/>
            <person name="Wang F."/>
            <person name="Ye M."/>
            <person name="Wang L."/>
            <person name="Zou H."/>
        </authorList>
    </citation>
    <scope>GLYCOSYLATION [LARGE SCALE ANALYSIS] AT ASN-198; ASN-275; ASN-288; ASN-930; ASN-988 AND ASN-1290</scope>
    <source>
        <tissue>Liver</tissue>
    </source>
</reference>
<reference key="5">
    <citation type="journal article" date="2014" name="J. Proteomics">
        <title>An enzyme assisted RP-RPLC approach for in-depth analysis of human liver phosphoproteome.</title>
        <authorList>
            <person name="Bian Y."/>
            <person name="Song C."/>
            <person name="Cheng K."/>
            <person name="Dong M."/>
            <person name="Wang F."/>
            <person name="Huang J."/>
            <person name="Sun D."/>
            <person name="Wang L."/>
            <person name="Ye M."/>
            <person name="Zou H."/>
        </authorList>
    </citation>
    <scope>IDENTIFICATION BY MASS SPECTROMETRY [LARGE SCALE ANALYSIS]</scope>
    <source>
        <tissue>Liver</tissue>
    </source>
</reference>
<protein>
    <recommendedName>
        <fullName>Collagen alpha-6(VI) chain</fullName>
    </recommendedName>
</protein>
<proteinExistence type="evidence at protein level"/>
<keyword id="KW-0025">Alternative splicing</keyword>
<keyword id="KW-0130">Cell adhesion</keyword>
<keyword id="KW-0176">Collagen</keyword>
<keyword id="KW-0272">Extracellular matrix</keyword>
<keyword id="KW-0325">Glycoprotein</keyword>
<keyword id="KW-0379">Hydroxylation</keyword>
<keyword id="KW-1267">Proteomics identification</keyword>
<keyword id="KW-1185">Reference proteome</keyword>
<keyword id="KW-0677">Repeat</keyword>
<keyword id="KW-0964">Secreted</keyword>
<keyword id="KW-0732">Signal</keyword>
<feature type="signal peptide" evidence="2">
    <location>
        <begin position="1"/>
        <end position="19"/>
    </location>
</feature>
<feature type="chain" id="PRO_5000266306" description="Collagen alpha-6(VI) chain">
    <location>
        <begin position="20"/>
        <end position="2263"/>
    </location>
</feature>
<feature type="domain" description="VWFA 1" evidence="3">
    <location>
        <begin position="27"/>
        <end position="206"/>
    </location>
</feature>
<feature type="domain" description="VWFA 2" evidence="3">
    <location>
        <begin position="229"/>
        <end position="411"/>
    </location>
</feature>
<feature type="domain" description="VWFA 3" evidence="3">
    <location>
        <begin position="436"/>
        <end position="606"/>
    </location>
</feature>
<feature type="domain" description="VWFA 4" evidence="3">
    <location>
        <begin position="622"/>
        <end position="791"/>
    </location>
</feature>
<feature type="domain" description="VWFA 5" evidence="3">
    <location>
        <begin position="809"/>
        <end position="982"/>
    </location>
</feature>
<feature type="domain" description="VWFA 6" evidence="3">
    <location>
        <begin position="1000"/>
        <end position="1171"/>
    </location>
</feature>
<feature type="domain" description="VWFA 7" evidence="3">
    <location>
        <begin position="1187"/>
        <end position="1371"/>
    </location>
</feature>
<feature type="domain" description="VWFA 8" evidence="3">
    <location>
        <begin position="1757"/>
        <end position="1937"/>
    </location>
</feature>
<feature type="domain" description="VWFA 9" evidence="3">
    <location>
        <begin position="1965"/>
        <end position="2166"/>
    </location>
</feature>
<feature type="region of interest" description="Nonhelical region">
    <location>
        <begin position="20"/>
        <end position="1391"/>
    </location>
</feature>
<feature type="region of interest" description="Triple-helical region">
    <location>
        <begin position="1392"/>
        <end position="1725"/>
    </location>
</feature>
<feature type="region of interest" description="Disordered" evidence="4">
    <location>
        <begin position="1397"/>
        <end position="1723"/>
    </location>
</feature>
<feature type="region of interest" description="Nonhelical region">
    <location>
        <begin position="1726"/>
        <end position="2263"/>
    </location>
</feature>
<feature type="short sequence motif" description="Cell attachment site" evidence="2">
    <location>
        <begin position="1508"/>
        <end position="1510"/>
    </location>
</feature>
<feature type="compositionally biased region" description="Basic and acidic residues" evidence="4">
    <location>
        <begin position="1498"/>
        <end position="1508"/>
    </location>
</feature>
<feature type="compositionally biased region" description="Basic residues" evidence="4">
    <location>
        <begin position="1547"/>
        <end position="1559"/>
    </location>
</feature>
<feature type="compositionally biased region" description="Gly residues" evidence="4">
    <location>
        <begin position="1680"/>
        <end position="1689"/>
    </location>
</feature>
<feature type="glycosylation site" description="N-linked (GlcNAc...) asparagine" evidence="5">
    <location>
        <position position="198"/>
    </location>
</feature>
<feature type="glycosylation site" description="N-linked (GlcNAc...) asparagine" evidence="5">
    <location>
        <position position="275"/>
    </location>
</feature>
<feature type="glycosylation site" description="N-linked (GlcNAc...) asparagine" evidence="5">
    <location>
        <position position="288"/>
    </location>
</feature>
<feature type="glycosylation site" description="N-linked (GlcNAc...) asparagine" evidence="2">
    <location>
        <position position="347"/>
    </location>
</feature>
<feature type="glycosylation site" description="N-linked (GlcNAc...) asparagine" evidence="2">
    <location>
        <position position="520"/>
    </location>
</feature>
<feature type="glycosylation site" description="N-linked (GlcNAc...) asparagine" evidence="5">
    <location>
        <position position="930"/>
    </location>
</feature>
<feature type="glycosylation site" description="N-linked (GlcNAc...) asparagine" evidence="5">
    <location>
        <position position="988"/>
    </location>
</feature>
<feature type="glycosylation site" description="N-linked (GlcNAc...) asparagine" evidence="5">
    <location>
        <position position="1290"/>
    </location>
</feature>
<feature type="splice variant" id="VSP_033914" description="In isoform 2." evidence="6">
    <original>GAPGVDSSI</original>
    <variation>VSARAANWS</variation>
    <location>
        <begin position="1512"/>
        <end position="1520"/>
    </location>
</feature>
<feature type="splice variant" id="VSP_033915" description="In isoform 2." evidence="6">
    <location>
        <begin position="1521"/>
        <end position="2263"/>
    </location>
</feature>
<feature type="sequence variant" id="VAR_043609" description="In dbSNP:rs4613427.">
    <original>E</original>
    <variation>K</variation>
    <location>
        <position position="345"/>
    </location>
</feature>
<feature type="sequence variant" id="VAR_043610" description="In dbSNP:rs9830253.">
    <original>A</original>
    <variation>T</variation>
    <location>
        <position position="370"/>
    </location>
</feature>
<feature type="sequence variant" id="VAR_043611" description="In dbSNP:rs11921769.">
    <original>E</original>
    <variation>A</variation>
    <location>
        <position position="461"/>
    </location>
</feature>
<feature type="sequence variant" id="VAR_061120" description="In dbSNP:rs59021909.">
    <original>P</original>
    <variation>S</variation>
    <location>
        <position position="556"/>
    </location>
</feature>
<feature type="sequence variant" id="VAR_043612" description="In dbSNP:rs16830494.">
    <original>R</original>
    <variation>Q</variation>
    <location>
        <position position="1739"/>
    </location>
</feature>
<feature type="sequence variant" id="VAR_043613" description="In dbSNP:rs7614116.">
    <original>H</original>
    <variation>R</variation>
    <location>
        <position position="1799"/>
    </location>
</feature>
<feature type="sequence conflict" description="In Ref. 3; CAH10639." evidence="7" ref="3">
    <original>A</original>
    <variation>V</variation>
    <location>
        <position position="1429"/>
    </location>
</feature>
<name>CO6A6_HUMAN</name>
<dbReference type="EMBL" id="AM774225">
    <property type="protein sequence ID" value="CAO81741.1"/>
    <property type="molecule type" value="mRNA"/>
</dbReference>
<dbReference type="EMBL" id="AM774226">
    <property type="protein sequence ID" value="CAO81739.1"/>
    <property type="molecule type" value="mRNA"/>
</dbReference>
<dbReference type="EMBL" id="AM774227">
    <property type="protein sequence ID" value="CAO81740.1"/>
    <property type="molecule type" value="mRNA"/>
</dbReference>
<dbReference type="EMBL" id="AC093006">
    <property type="status" value="NOT_ANNOTATED_CDS"/>
    <property type="molecule type" value="Genomic_DNA"/>
</dbReference>
<dbReference type="EMBL" id="AC128683">
    <property type="status" value="NOT_ANNOTATED_CDS"/>
    <property type="molecule type" value="Genomic_DNA"/>
</dbReference>
<dbReference type="EMBL" id="AL713792">
    <property type="protein sequence ID" value="CAH10639.2"/>
    <property type="molecule type" value="mRNA"/>
</dbReference>
<dbReference type="CCDS" id="CCDS46911.1">
    <molecule id="A6NMZ7-1"/>
</dbReference>
<dbReference type="RefSeq" id="NP_001096078.1">
    <molecule id="A6NMZ7-1"/>
    <property type="nucleotide sequence ID" value="NM_001102608.3"/>
</dbReference>
<dbReference type="RefSeq" id="XP_005247178.1">
    <molecule id="A6NMZ7-1"/>
    <property type="nucleotide sequence ID" value="XM_005247121.6"/>
</dbReference>
<dbReference type="RefSeq" id="XP_011510727.1">
    <property type="nucleotide sequence ID" value="XM_011512425.2"/>
</dbReference>
<dbReference type="RefSeq" id="XP_011510728.1">
    <molecule id="A6NMZ7-1"/>
    <property type="nucleotide sequence ID" value="XM_011512426.4"/>
</dbReference>
<dbReference type="RefSeq" id="XP_011510730.1">
    <property type="nucleotide sequence ID" value="XM_011512428.2"/>
</dbReference>
<dbReference type="RefSeq" id="XP_016861200.1">
    <molecule id="A6NMZ7-1"/>
    <property type="nucleotide sequence ID" value="XM_017005711.3"/>
</dbReference>
<dbReference type="RefSeq" id="XP_016861201.1">
    <molecule id="A6NMZ7-1"/>
    <property type="nucleotide sequence ID" value="XM_017005712.3"/>
</dbReference>
<dbReference type="RefSeq" id="XP_016861202.1">
    <molecule id="A6NMZ7-1"/>
    <property type="nucleotide sequence ID" value="XM_017005713.3"/>
</dbReference>
<dbReference type="RefSeq" id="XP_016861203.1">
    <molecule id="A6NMZ7-1"/>
    <property type="nucleotide sequence ID" value="XM_017005714.3"/>
</dbReference>
<dbReference type="RefSeq" id="XP_016861204.1">
    <property type="nucleotide sequence ID" value="XM_017005715.1"/>
</dbReference>
<dbReference type="RefSeq" id="XP_047303401.1">
    <molecule id="A6NMZ7-1"/>
    <property type="nucleotide sequence ID" value="XM_047447445.1"/>
</dbReference>
<dbReference type="RefSeq" id="XP_047303402.1">
    <molecule id="A6NMZ7-1"/>
    <property type="nucleotide sequence ID" value="XM_047447446.1"/>
</dbReference>
<dbReference type="RefSeq" id="XP_047303403.1">
    <molecule id="A6NMZ7-1"/>
    <property type="nucleotide sequence ID" value="XM_047447447.1"/>
</dbReference>
<dbReference type="RefSeq" id="XP_047303404.1">
    <molecule id="A6NMZ7-1"/>
    <property type="nucleotide sequence ID" value="XM_047447448.1"/>
</dbReference>
<dbReference type="SMR" id="A6NMZ7"/>
<dbReference type="BioGRID" id="126296">
    <property type="interactions" value="8"/>
</dbReference>
<dbReference type="FunCoup" id="A6NMZ7">
    <property type="interactions" value="563"/>
</dbReference>
<dbReference type="IntAct" id="A6NMZ7">
    <property type="interactions" value="2"/>
</dbReference>
<dbReference type="STRING" id="9606.ENSP00000351310"/>
<dbReference type="ChEMBL" id="CHEMBL2364188"/>
<dbReference type="GlyConnect" id="1140">
    <property type="glycosylation" value="8 N-Linked glycans (4 sites)"/>
</dbReference>
<dbReference type="GlyCosmos" id="A6NMZ7">
    <property type="glycosylation" value="10 sites, 8 glycans"/>
</dbReference>
<dbReference type="GlyGen" id="A6NMZ7">
    <property type="glycosylation" value="14 sites, 19 N-linked glycans (8 sites)"/>
</dbReference>
<dbReference type="iPTMnet" id="A6NMZ7"/>
<dbReference type="PhosphoSitePlus" id="A6NMZ7"/>
<dbReference type="SwissPalm" id="A6NMZ7"/>
<dbReference type="BioMuta" id="COL6A6"/>
<dbReference type="jPOST" id="A6NMZ7"/>
<dbReference type="MassIVE" id="A6NMZ7"/>
<dbReference type="PaxDb" id="9606-ENSP00000351310"/>
<dbReference type="PeptideAtlas" id="A6NMZ7"/>
<dbReference type="ProteomicsDB" id="1573">
    <molecule id="A6NMZ7-1"/>
</dbReference>
<dbReference type="ProteomicsDB" id="1574">
    <molecule id="A6NMZ7-2"/>
</dbReference>
<dbReference type="Antibodypedia" id="56016">
    <property type="antibodies" value="54 antibodies from 10 providers"/>
</dbReference>
<dbReference type="DNASU" id="131873"/>
<dbReference type="Ensembl" id="ENST00000358511.11">
    <molecule id="A6NMZ7-1"/>
    <property type="protein sequence ID" value="ENSP00000351310.6"/>
    <property type="gene ID" value="ENSG00000206384.11"/>
</dbReference>
<dbReference type="GeneID" id="131873"/>
<dbReference type="KEGG" id="hsa:131873"/>
<dbReference type="MANE-Select" id="ENST00000358511.11">
    <property type="protein sequence ID" value="ENSP00000351310.6"/>
    <property type="RefSeq nucleotide sequence ID" value="NM_001102608.3"/>
    <property type="RefSeq protein sequence ID" value="NP_001096078.1"/>
</dbReference>
<dbReference type="UCSC" id="uc010htl.4">
    <molecule id="A6NMZ7-1"/>
    <property type="organism name" value="human"/>
</dbReference>
<dbReference type="AGR" id="HGNC:27023"/>
<dbReference type="CTD" id="131873"/>
<dbReference type="DisGeNET" id="131873"/>
<dbReference type="GeneCards" id="COL6A6"/>
<dbReference type="HGNC" id="HGNC:27023">
    <property type="gene designation" value="COL6A6"/>
</dbReference>
<dbReference type="HPA" id="ENSG00000206384">
    <property type="expression patterns" value="Tissue enriched (parathyroid)"/>
</dbReference>
<dbReference type="MalaCards" id="COL6A6"/>
<dbReference type="MIM" id="616613">
    <property type="type" value="gene"/>
</dbReference>
<dbReference type="neXtProt" id="NX_A6NMZ7"/>
<dbReference type="OpenTargets" id="ENSG00000206384"/>
<dbReference type="PharmGKB" id="PA165697087"/>
<dbReference type="VEuPathDB" id="HostDB:ENSG00000206384"/>
<dbReference type="eggNOG" id="KOG3544">
    <property type="taxonomic scope" value="Eukaryota"/>
</dbReference>
<dbReference type="GeneTree" id="ENSGT00940000155619"/>
<dbReference type="HOGENOM" id="CLU_000182_0_0_1"/>
<dbReference type="InParanoid" id="A6NMZ7"/>
<dbReference type="OMA" id="TWDDKEL"/>
<dbReference type="OrthoDB" id="10256829at2759"/>
<dbReference type="PAN-GO" id="A6NMZ7">
    <property type="GO annotations" value="1 GO annotation based on evolutionary models"/>
</dbReference>
<dbReference type="PhylomeDB" id="A6NMZ7"/>
<dbReference type="TreeFam" id="TF318242"/>
<dbReference type="PathwayCommons" id="A6NMZ7"/>
<dbReference type="Reactome" id="R-HSA-1442490">
    <property type="pathway name" value="Collagen degradation"/>
</dbReference>
<dbReference type="Reactome" id="R-HSA-1650814">
    <property type="pathway name" value="Collagen biosynthesis and modifying enzymes"/>
</dbReference>
<dbReference type="Reactome" id="R-HSA-186797">
    <property type="pathway name" value="Signaling by PDGF"/>
</dbReference>
<dbReference type="Reactome" id="R-HSA-2022090">
    <property type="pathway name" value="Assembly of collagen fibrils and other multimeric structures"/>
</dbReference>
<dbReference type="Reactome" id="R-HSA-216083">
    <property type="pathway name" value="Integrin cell surface interactions"/>
</dbReference>
<dbReference type="Reactome" id="R-HSA-3000178">
    <property type="pathway name" value="ECM proteoglycans"/>
</dbReference>
<dbReference type="Reactome" id="R-HSA-419037">
    <property type="pathway name" value="NCAM1 interactions"/>
</dbReference>
<dbReference type="Reactome" id="R-HSA-8948216">
    <property type="pathway name" value="Collagen chain trimerization"/>
</dbReference>
<dbReference type="SignaLink" id="A6NMZ7"/>
<dbReference type="SIGNOR" id="A6NMZ7"/>
<dbReference type="BioGRID-ORCS" id="131873">
    <property type="hits" value="9 hits in 1139 CRISPR screens"/>
</dbReference>
<dbReference type="ChiTaRS" id="COL6A6">
    <property type="organism name" value="human"/>
</dbReference>
<dbReference type="GenomeRNAi" id="131873"/>
<dbReference type="Pharos" id="A6NMZ7">
    <property type="development level" value="Tbio"/>
</dbReference>
<dbReference type="PRO" id="PR:A6NMZ7"/>
<dbReference type="Proteomes" id="UP000005640">
    <property type="component" value="Chromosome 3"/>
</dbReference>
<dbReference type="RNAct" id="A6NMZ7">
    <property type="molecule type" value="protein"/>
</dbReference>
<dbReference type="Bgee" id="ENSG00000206384">
    <property type="expression patterns" value="Expressed in buccal mucosa cell and 94 other cell types or tissues"/>
</dbReference>
<dbReference type="ExpressionAtlas" id="A6NMZ7">
    <property type="expression patterns" value="baseline and differential"/>
</dbReference>
<dbReference type="GO" id="GO:0005589">
    <property type="term" value="C:collagen type VI trimer"/>
    <property type="evidence" value="ECO:0000304"/>
    <property type="project" value="GO_Central"/>
</dbReference>
<dbReference type="GO" id="GO:0062023">
    <property type="term" value="C:collagen-containing extracellular matrix"/>
    <property type="evidence" value="ECO:0007005"/>
    <property type="project" value="BHF-UCL"/>
</dbReference>
<dbReference type="GO" id="GO:0031012">
    <property type="term" value="C:extracellular matrix"/>
    <property type="evidence" value="ECO:0000314"/>
    <property type="project" value="MGI"/>
</dbReference>
<dbReference type="GO" id="GO:0005576">
    <property type="term" value="C:extracellular region"/>
    <property type="evidence" value="ECO:0000304"/>
    <property type="project" value="Reactome"/>
</dbReference>
<dbReference type="GO" id="GO:0007155">
    <property type="term" value="P:cell adhesion"/>
    <property type="evidence" value="ECO:0007669"/>
    <property type="project" value="UniProtKB-KW"/>
</dbReference>
<dbReference type="GO" id="GO:0030198">
    <property type="term" value="P:extracellular matrix organization"/>
    <property type="evidence" value="ECO:0000318"/>
    <property type="project" value="GO_Central"/>
</dbReference>
<dbReference type="CDD" id="cd01472">
    <property type="entry name" value="vWA_collagen"/>
    <property type="match status" value="3"/>
</dbReference>
<dbReference type="CDD" id="cd01450">
    <property type="entry name" value="vWFA_subfamily_ECM"/>
    <property type="match status" value="3"/>
</dbReference>
<dbReference type="FunFam" id="3.40.50.410:FF:000004">
    <property type="entry name" value="collagen alpha-6(VI) chain"/>
    <property type="match status" value="3"/>
</dbReference>
<dbReference type="FunFam" id="3.40.50.410:FF:000003">
    <property type="entry name" value="Collagen type VI alpha 3 chain"/>
    <property type="match status" value="2"/>
</dbReference>
<dbReference type="FunFam" id="3.40.50.410:FF:000016">
    <property type="entry name" value="Collagen type VI alpha 3 chain"/>
    <property type="match status" value="1"/>
</dbReference>
<dbReference type="FunFam" id="3.40.50.410:FF:000044">
    <property type="entry name" value="Collagen type VI alpha 6 chain"/>
    <property type="match status" value="1"/>
</dbReference>
<dbReference type="FunFam" id="3.40.50.410:FF:000021">
    <property type="entry name" value="Collagen, type VI, alpha 3"/>
    <property type="match status" value="1"/>
</dbReference>
<dbReference type="Gene3D" id="1.20.5.320">
    <property type="entry name" value="6-Phosphogluconate Dehydrogenase, domain 3"/>
    <property type="match status" value="1"/>
</dbReference>
<dbReference type="Gene3D" id="3.40.50.410">
    <property type="entry name" value="von Willebrand factor, type A domain"/>
    <property type="match status" value="8"/>
</dbReference>
<dbReference type="InterPro" id="IPR008160">
    <property type="entry name" value="Collagen"/>
</dbReference>
<dbReference type="InterPro" id="IPR050525">
    <property type="entry name" value="ECM_Assembly_Org"/>
</dbReference>
<dbReference type="InterPro" id="IPR002035">
    <property type="entry name" value="VWF_A"/>
</dbReference>
<dbReference type="InterPro" id="IPR036465">
    <property type="entry name" value="vWFA_dom_sf"/>
</dbReference>
<dbReference type="PANTHER" id="PTHR24020">
    <property type="entry name" value="COLLAGEN ALPHA"/>
    <property type="match status" value="1"/>
</dbReference>
<dbReference type="PANTHER" id="PTHR24020:SF20">
    <property type="entry name" value="PH DOMAIN-CONTAINING PROTEIN"/>
    <property type="match status" value="1"/>
</dbReference>
<dbReference type="Pfam" id="PF01391">
    <property type="entry name" value="Collagen"/>
    <property type="match status" value="1"/>
</dbReference>
<dbReference type="Pfam" id="PF00092">
    <property type="entry name" value="VWA"/>
    <property type="match status" value="8"/>
</dbReference>
<dbReference type="PRINTS" id="PR00453">
    <property type="entry name" value="VWFADOMAIN"/>
</dbReference>
<dbReference type="SMART" id="SM00327">
    <property type="entry name" value="VWA"/>
    <property type="match status" value="9"/>
</dbReference>
<dbReference type="SUPFAM" id="SSF53300">
    <property type="entry name" value="vWA-like"/>
    <property type="match status" value="9"/>
</dbReference>
<dbReference type="PROSITE" id="PS50234">
    <property type="entry name" value="VWFA"/>
    <property type="match status" value="9"/>
</dbReference>
<gene>
    <name type="primary">COL6A6</name>
</gene>
<accession>A6NMZ7</accession>
<accession>A7DZQ0</accession>
<accession>A7DZQ1</accession>
<accession>A7DZQ2</accession>
<accession>Q69YT0</accession>
<comment type="function">
    <text evidence="1">Collagen VI acts as a cell-binding protein.</text>
</comment>
<comment type="subunit">
    <text evidence="7">Trimers composed of three different chains: alpha-1(VI), alpha-2(VI), and alpha-3(VI) or alpha-5(VI) or alpha-6(VI).</text>
</comment>
<comment type="subcellular location">
    <subcellularLocation>
        <location evidence="1">Secreted</location>
        <location evidence="1">Extracellular space</location>
        <location evidence="1">Extracellular matrix</location>
    </subcellularLocation>
    <text evidence="1">Deposed in the extracellular matrix of skeletal muscle.</text>
</comment>
<comment type="alternative products">
    <event type="alternative splicing"/>
    <isoform>
        <id>A6NMZ7-1</id>
        <name>1</name>
        <sequence type="displayed"/>
    </isoform>
    <isoform>
        <id>A6NMZ7-2</id>
        <name>2</name>
        <sequence type="described" ref="VSP_033914 VSP_033915"/>
    </isoform>
</comment>
<comment type="PTM">
    <text evidence="1">Prolines at the third position of the tripeptide repeating unit (G-X-Y) are hydroxylated in some or all of the chains.</text>
</comment>
<comment type="similarity">
    <text evidence="7">Belongs to the type VI collagen family.</text>
</comment>
<sequence length="2263" mass="247173">MMLLILFLVIICSHISVNQDSGPEYADVVFLVDSSDRLGSKSFPFVKMFITKMISSLPIEADKYRVALAQYSDKLHSEFHLSTFKGRSPMLNHLRKNFGFIGGSLQIGKALQEAHRTYFSAPANGRDKKQFPPILVVLASSESEDNVEEASKALRKDGVKIISVGVQKASEENLKAMATSQFHFNLRTVRDLSMFSQNMTHIIKDVIKYKEGAVDDIFVEACQGPSMADVVFLLDMSINGSEENFDYLKGFLEESVSALDIKENCMRVGLVAYSNETKVINSLSMGINKSEVLQHIQNLSPRTGKAYTGAAIKKLRKEVFSARNGSRKNQGVPQIAVLVTHRDSEDNVTKAAVNLRREGVTIFTLGIEGASDTQLEKIASHPAEQYVSKLKTFADLAAHNQTFLKKLRNQITHTVSVFSERTETLKSGCVDTEEADIYLLIDGSGSTQATDFHEMKTFLSEVVGMFNIAPHKVRVGAVQYADSWDLEFEINKYSNKQDLGKAIENIRQMGGNTNTGAALNFTLSLLQKAKKQRGNKVPCHLVVLTNGMSKDSILEPANRLREEHIRVYAIGIKEANQTQLREIAGEEKRVYYVHDFDALKDIRNQVVQEICTEEACKEMKADIMFLVDSSGSIGPENFSKMKTFMKNLVSKSQIGPDRVQIGVVQFSDINKEEFQLNRFMSQSDISNAIDQMAHIGQTTLTGSALSFVSQYFSPTKGARPNIRKFLILITDGEAQDIVKEPAVVLRQEGVIIYSVGVFGSNVTQLEEISGRPEMVFYVENFDILQRIEDDLVFGICSPREECKRIEVLDVVFVIDSSGSIDYDEYNIMKDFMIGLVKKADVGKNQVRFGALKYADDPEVLFYLDDFGTKLEVISVLQNDQAMGGSTYTAEALGFSDHMFTEARGSRLNKGVPQVLIVITDGESHDADKLNATAKALRDKGILVLAVGIDGANPVELLAMAGSSDKYFFVETFGGLKGIFSDVTASVCNSSKVDCEIDKVDLVFLMDGSTSIQPNDFKKMKEFLASVVQDFDVSLNRVRIGAAQFSDTYHPEFPLGTFIGEKEISFQIENIKQIFGNTHIGAALREVEHYFRPDMGSRINTGTPQVLLVLTDGQSQDEVAQAAEALRHRGIDIYSVGIGDVDDQQLIQITGTAEKKLTVHNFDELKKVNKRIVRNICTTAGESNCFVDVVVGFDVSTQEKGQTLLEGQPWMETYLQDILRAISSLNGVSCEVGTETQVSVAFQVTNAMEKYSPKFEIYSENILNSLKDITVKGPSLLNANLLDSLWDTFQNKSAARGKVVLLFSDGLDDDVEKLEQKSDELRKEGLNALITVALDGPADSSDLADLPYIEFGKGFEYRTQLSIGMRELGSRLSKQLVNVAERTCCCLFCKCIGGDGTMGDPGPPGKRGPPGFKGSEGYLGEEGIAGERGAPGPVGEQGTKGCYGTKGPKGNRGLNGQEGEVGENGIDGLNGEQGDNGLPGRKGEKGDEGSQGSPGKRGTPGDRGAKGLRGDPGAPGVDSSIEGPTGLKGERGRQGRRGWPGPPGTPGSRRKTAAHGRRGHTGPQGTAGIPGPDGLEGSLGLKGPQGPRGEAGVKGEKGGVGSKGPQGPPGPGGEAGNQGRLGSQGNKGEPGDLGEKGAVGFPGPRGLQGNDGSPGYGSVGRKGAKGQEGFPGESGPKGEIGDPGGPGETGLKGARGKMISAGLPGEMGSPGEPGPPGRKGVKGAKGLASFSTCELIQYVRDRSPGRHGKPECPVHPTELVFALDHSRDVTEQEFERMKEMMAFLVRDIKVRENSCPVGAHIAILSYNSHARHLVRFSDAYKKSQLLREIETIPYERSSASREIGRAMRFISRNVFKRTLPGAHTRKIATFFSSGQSADAHSITTAAMEFGALEIIPVVITFSNVPSVRRAFAIDDTGTFQVIVVPSGADYIPALERLQRCTFCYDVCKPDASCDQARPPPVQSYMDAAFLLDASRNMGSAEFEDIRAFLGALLDHFEITPEPETSVTGDRVALLSHAPPDFLPNTQKSPVRAEFNLTTYRSKRLMKRHVHESVKQLNGDAFIGHALQWTLDNVFLSTPNLRRNKVIFVISAGETSHLDGEILKKESLRAKCQGYALFVFSLGPIWDDKELEDLASHPLDHHLVQLGRIHKPDHSYGVKFVKSFINSIRRAINKYPPINLKIKCNRLNSIDPKQPPRPFRSFVPGPLKATLKEDVLQKAKFFQDKKYLSRVARSGRDDAIQNFMRSTSHTFKNGRMIESAPKQHD</sequence>
<evidence type="ECO:0000250" key="1"/>
<evidence type="ECO:0000255" key="2"/>
<evidence type="ECO:0000255" key="3">
    <source>
        <dbReference type="PROSITE-ProRule" id="PRU00219"/>
    </source>
</evidence>
<evidence type="ECO:0000256" key="4">
    <source>
        <dbReference type="SAM" id="MobiDB-lite"/>
    </source>
</evidence>
<evidence type="ECO:0000269" key="5">
    <source>
    </source>
</evidence>
<evidence type="ECO:0000303" key="6">
    <source>
    </source>
</evidence>
<evidence type="ECO:0000305" key="7"/>